<accession>Q9ZKM7</accession>
<name>GPMI_HELPJ</name>
<keyword id="KW-0324">Glycolysis</keyword>
<keyword id="KW-0413">Isomerase</keyword>
<keyword id="KW-0464">Manganese</keyword>
<keyword id="KW-0479">Metal-binding</keyword>
<proteinExistence type="inferred from homology"/>
<sequence length="491" mass="54814">MAQKTLLIITDGIGYRKDSDHNAFFHAKKPTYDLMFKTLPYSLIDTHGLSVGLPKGQMGNSEVGHMCIGAGRVLYQDLVRISLSLQNDELKNNPAFLNTIQKSHVVHLMGLMSDGGVHSHIEHFIALALECEKSHKKVCLHLITDGRDVAPKSALTYLKQMQNICNENIQIATISGRFYAMDRDNRFERIELAYNSLMGLNHTPLSPSEYIQSQYDKNITDEFIIPACFKNYCGMQDDESFIFINFRNDRAREIVSALGQKEFNSFKRQAFKKLHIATMTPYDNSFPYPVLFPKESVQNTLAEVVSQHNLTQSHIAETEKYAHVTFFINGGVETPFKNENRVLIQSPKVTTYDLKPEMSAKGVTLAVLEQMRLGTDLIIVNFANGDMVGHTGNFEASIKAVEAVDACLGEILSLAKELDYAMLLTSDHGNCERMKDENQNPLTNHTAGSVYCFVLGNGVKSIKNGALNNIASSVLKLMGIKAPATMDEPLF</sequence>
<protein>
    <recommendedName>
        <fullName evidence="1">2,3-bisphosphoglycerate-independent phosphoglycerate mutase</fullName>
        <shortName evidence="1">BPG-independent PGAM</shortName>
        <shortName evidence="1">Phosphoglyceromutase</shortName>
        <shortName evidence="1">iPGM</shortName>
        <ecNumber evidence="1">5.4.2.12</ecNumber>
    </recommendedName>
</protein>
<organism>
    <name type="scientific">Helicobacter pylori (strain J99 / ATCC 700824)</name>
    <name type="common">Campylobacter pylori J99</name>
    <dbReference type="NCBI Taxonomy" id="85963"/>
    <lineage>
        <taxon>Bacteria</taxon>
        <taxon>Pseudomonadati</taxon>
        <taxon>Campylobacterota</taxon>
        <taxon>Epsilonproteobacteria</taxon>
        <taxon>Campylobacterales</taxon>
        <taxon>Helicobacteraceae</taxon>
        <taxon>Helicobacter</taxon>
    </lineage>
</organism>
<reference key="1">
    <citation type="journal article" date="1999" name="Nature">
        <title>Genomic sequence comparison of two unrelated isolates of the human gastric pathogen Helicobacter pylori.</title>
        <authorList>
            <person name="Alm R.A."/>
            <person name="Ling L.-S.L."/>
            <person name="Moir D.T."/>
            <person name="King B.L."/>
            <person name="Brown E.D."/>
            <person name="Doig P.C."/>
            <person name="Smith D.R."/>
            <person name="Noonan B."/>
            <person name="Guild B.C."/>
            <person name="deJonge B.L."/>
            <person name="Carmel G."/>
            <person name="Tummino P.J."/>
            <person name="Caruso A."/>
            <person name="Uria-Nickelsen M."/>
            <person name="Mills D.M."/>
            <person name="Ives C."/>
            <person name="Gibson R."/>
            <person name="Merberg D."/>
            <person name="Mills S.D."/>
            <person name="Jiang Q."/>
            <person name="Taylor D.E."/>
            <person name="Vovis G.F."/>
            <person name="Trust T.J."/>
        </authorList>
    </citation>
    <scope>NUCLEOTIDE SEQUENCE [LARGE SCALE GENOMIC DNA]</scope>
    <source>
        <strain>J99 / ATCC 700824</strain>
    </source>
</reference>
<comment type="function">
    <text evidence="1">Catalyzes the interconversion of 2-phosphoglycerate and 3-phosphoglycerate.</text>
</comment>
<comment type="catalytic activity">
    <reaction evidence="1">
        <text>(2R)-2-phosphoglycerate = (2R)-3-phosphoglycerate</text>
        <dbReference type="Rhea" id="RHEA:15901"/>
        <dbReference type="ChEBI" id="CHEBI:58272"/>
        <dbReference type="ChEBI" id="CHEBI:58289"/>
        <dbReference type="EC" id="5.4.2.12"/>
    </reaction>
</comment>
<comment type="cofactor">
    <cofactor evidence="1">
        <name>Mn(2+)</name>
        <dbReference type="ChEBI" id="CHEBI:29035"/>
    </cofactor>
    <text evidence="1">Binds 2 manganese ions per subunit.</text>
</comment>
<comment type="pathway">
    <text evidence="1">Carbohydrate degradation; glycolysis; pyruvate from D-glyceraldehyde 3-phosphate: step 3/5.</text>
</comment>
<comment type="subunit">
    <text evidence="1">Monomer.</text>
</comment>
<comment type="similarity">
    <text evidence="1">Belongs to the BPG-independent phosphoglycerate mutase family.</text>
</comment>
<evidence type="ECO:0000255" key="1">
    <source>
        <dbReference type="HAMAP-Rule" id="MF_01038"/>
    </source>
</evidence>
<gene>
    <name evidence="1" type="primary">gpmI</name>
    <name type="synonym">pgm</name>
    <name type="ordered locus">jhp_0908</name>
</gene>
<feature type="chain" id="PRO_0000212155" description="2,3-bisphosphoglycerate-independent phosphoglycerate mutase">
    <location>
        <begin position="1"/>
        <end position="491"/>
    </location>
</feature>
<feature type="active site" description="Phosphoserine intermediate" evidence="1">
    <location>
        <position position="61"/>
    </location>
</feature>
<feature type="binding site" evidence="1">
    <location>
        <position position="11"/>
    </location>
    <ligand>
        <name>Mn(2+)</name>
        <dbReference type="ChEBI" id="CHEBI:29035"/>
        <label>2</label>
    </ligand>
</feature>
<feature type="binding site" evidence="1">
    <location>
        <position position="61"/>
    </location>
    <ligand>
        <name>Mn(2+)</name>
        <dbReference type="ChEBI" id="CHEBI:29035"/>
        <label>2</label>
    </ligand>
</feature>
<feature type="binding site" evidence="1">
    <location>
        <position position="118"/>
    </location>
    <ligand>
        <name>substrate</name>
    </ligand>
</feature>
<feature type="binding site" evidence="1">
    <location>
        <begin position="147"/>
        <end position="148"/>
    </location>
    <ligand>
        <name>substrate</name>
    </ligand>
</feature>
<feature type="binding site" evidence="1">
    <location>
        <position position="177"/>
    </location>
    <ligand>
        <name>substrate</name>
    </ligand>
</feature>
<feature type="binding site" evidence="1">
    <location>
        <position position="183"/>
    </location>
    <ligand>
        <name>substrate</name>
    </ligand>
</feature>
<feature type="binding site" evidence="1">
    <location>
        <begin position="247"/>
        <end position="250"/>
    </location>
    <ligand>
        <name>substrate</name>
    </ligand>
</feature>
<feature type="binding site" evidence="1">
    <location>
        <position position="320"/>
    </location>
    <ligand>
        <name>substrate</name>
    </ligand>
</feature>
<feature type="binding site" evidence="1">
    <location>
        <position position="386"/>
    </location>
    <ligand>
        <name>Mn(2+)</name>
        <dbReference type="ChEBI" id="CHEBI:29035"/>
        <label>1</label>
    </ligand>
</feature>
<feature type="binding site" evidence="1">
    <location>
        <position position="390"/>
    </location>
    <ligand>
        <name>Mn(2+)</name>
        <dbReference type="ChEBI" id="CHEBI:29035"/>
        <label>1</label>
    </ligand>
</feature>
<feature type="binding site" evidence="1">
    <location>
        <position position="427"/>
    </location>
    <ligand>
        <name>Mn(2+)</name>
        <dbReference type="ChEBI" id="CHEBI:29035"/>
        <label>2</label>
    </ligand>
</feature>
<feature type="binding site" evidence="1">
    <location>
        <position position="428"/>
    </location>
    <ligand>
        <name>Mn(2+)</name>
        <dbReference type="ChEBI" id="CHEBI:29035"/>
        <label>2</label>
    </ligand>
</feature>
<feature type="binding site" evidence="1">
    <location>
        <position position="445"/>
    </location>
    <ligand>
        <name>Mn(2+)</name>
        <dbReference type="ChEBI" id="CHEBI:29035"/>
        <label>1</label>
    </ligand>
</feature>
<dbReference type="EC" id="5.4.2.12" evidence="1"/>
<dbReference type="EMBL" id="AE001439">
    <property type="protein sequence ID" value="AAD06490.1"/>
    <property type="molecule type" value="Genomic_DNA"/>
</dbReference>
<dbReference type="PIR" id="G71872">
    <property type="entry name" value="G71872"/>
</dbReference>
<dbReference type="RefSeq" id="WP_000057754.1">
    <property type="nucleotide sequence ID" value="NC_000921.1"/>
</dbReference>
<dbReference type="SMR" id="Q9ZKM7"/>
<dbReference type="KEGG" id="hpj:jhp_0908"/>
<dbReference type="PATRIC" id="fig|85963.30.peg.52"/>
<dbReference type="eggNOG" id="COG0696">
    <property type="taxonomic scope" value="Bacteria"/>
</dbReference>
<dbReference type="UniPathway" id="UPA00109">
    <property type="reaction ID" value="UER00186"/>
</dbReference>
<dbReference type="Proteomes" id="UP000000804">
    <property type="component" value="Chromosome"/>
</dbReference>
<dbReference type="GO" id="GO:0005829">
    <property type="term" value="C:cytosol"/>
    <property type="evidence" value="ECO:0007669"/>
    <property type="project" value="TreeGrafter"/>
</dbReference>
<dbReference type="GO" id="GO:0030145">
    <property type="term" value="F:manganese ion binding"/>
    <property type="evidence" value="ECO:0007669"/>
    <property type="project" value="UniProtKB-UniRule"/>
</dbReference>
<dbReference type="GO" id="GO:0004619">
    <property type="term" value="F:phosphoglycerate mutase activity"/>
    <property type="evidence" value="ECO:0007669"/>
    <property type="project" value="UniProtKB-EC"/>
</dbReference>
<dbReference type="GO" id="GO:0006007">
    <property type="term" value="P:glucose catabolic process"/>
    <property type="evidence" value="ECO:0007669"/>
    <property type="project" value="InterPro"/>
</dbReference>
<dbReference type="GO" id="GO:0006096">
    <property type="term" value="P:glycolytic process"/>
    <property type="evidence" value="ECO:0007669"/>
    <property type="project" value="UniProtKB-UniRule"/>
</dbReference>
<dbReference type="CDD" id="cd16010">
    <property type="entry name" value="iPGM"/>
    <property type="match status" value="1"/>
</dbReference>
<dbReference type="FunFam" id="3.40.1450.10:FF:000002">
    <property type="entry name" value="2,3-bisphosphoglycerate-independent phosphoglycerate mutase"/>
    <property type="match status" value="1"/>
</dbReference>
<dbReference type="Gene3D" id="3.40.720.10">
    <property type="entry name" value="Alkaline Phosphatase, subunit A"/>
    <property type="match status" value="1"/>
</dbReference>
<dbReference type="Gene3D" id="3.40.1450.10">
    <property type="entry name" value="BPG-independent phosphoglycerate mutase, domain B"/>
    <property type="match status" value="1"/>
</dbReference>
<dbReference type="HAMAP" id="MF_01038">
    <property type="entry name" value="GpmI"/>
    <property type="match status" value="1"/>
</dbReference>
<dbReference type="InterPro" id="IPR017850">
    <property type="entry name" value="Alkaline_phosphatase_core_sf"/>
</dbReference>
<dbReference type="InterPro" id="IPR011258">
    <property type="entry name" value="BPG-indep_PGM_N"/>
</dbReference>
<dbReference type="InterPro" id="IPR006124">
    <property type="entry name" value="Metalloenzyme"/>
</dbReference>
<dbReference type="InterPro" id="IPR036646">
    <property type="entry name" value="PGAM_B_sf"/>
</dbReference>
<dbReference type="InterPro" id="IPR005995">
    <property type="entry name" value="Pgm_bpd_ind"/>
</dbReference>
<dbReference type="NCBIfam" id="TIGR01307">
    <property type="entry name" value="pgm_bpd_ind"/>
    <property type="match status" value="1"/>
</dbReference>
<dbReference type="PANTHER" id="PTHR31637">
    <property type="entry name" value="2,3-BISPHOSPHOGLYCERATE-INDEPENDENT PHOSPHOGLYCERATE MUTASE"/>
    <property type="match status" value="1"/>
</dbReference>
<dbReference type="PANTHER" id="PTHR31637:SF0">
    <property type="entry name" value="2,3-BISPHOSPHOGLYCERATE-INDEPENDENT PHOSPHOGLYCERATE MUTASE"/>
    <property type="match status" value="1"/>
</dbReference>
<dbReference type="Pfam" id="PF06415">
    <property type="entry name" value="iPGM_N"/>
    <property type="match status" value="1"/>
</dbReference>
<dbReference type="Pfam" id="PF01676">
    <property type="entry name" value="Metalloenzyme"/>
    <property type="match status" value="1"/>
</dbReference>
<dbReference type="PIRSF" id="PIRSF001492">
    <property type="entry name" value="IPGAM"/>
    <property type="match status" value="1"/>
</dbReference>
<dbReference type="SUPFAM" id="SSF64158">
    <property type="entry name" value="2,3-Bisphosphoglycerate-independent phosphoglycerate mutase, substrate-binding domain"/>
    <property type="match status" value="1"/>
</dbReference>
<dbReference type="SUPFAM" id="SSF53649">
    <property type="entry name" value="Alkaline phosphatase-like"/>
    <property type="match status" value="1"/>
</dbReference>